<keyword id="KW-0223">Dioxygenase</keyword>
<keyword id="KW-0479">Metal-binding</keyword>
<keyword id="KW-0560">Oxidoreductase</keyword>
<keyword id="KW-1185">Reference proteome</keyword>
<feature type="chain" id="PRO_0000214065" description="Putative quercetin 2,3-dioxygenase Rv0181c">
    <location>
        <begin position="1"/>
        <end position="244"/>
    </location>
</feature>
<feature type="binding site" evidence="1">
    <location>
        <position position="60"/>
    </location>
    <ligand>
        <name>a divalent metal cation</name>
        <dbReference type="ChEBI" id="CHEBI:60240"/>
    </ligand>
</feature>
<feature type="binding site" evidence="1">
    <location>
        <position position="62"/>
    </location>
    <ligand>
        <name>a divalent metal cation</name>
        <dbReference type="ChEBI" id="CHEBI:60240"/>
    </ligand>
</feature>
<feature type="binding site" evidence="1">
    <location>
        <position position="104"/>
    </location>
    <ligand>
        <name>a divalent metal cation</name>
        <dbReference type="ChEBI" id="CHEBI:60240"/>
    </ligand>
</feature>
<feature type="binding site" evidence="1">
    <location>
        <position position="106"/>
    </location>
    <ligand>
        <name>a divalent metal cation</name>
        <dbReference type="ChEBI" id="CHEBI:60240"/>
    </ligand>
</feature>
<evidence type="ECO:0000250" key="1"/>
<evidence type="ECO:0000305" key="2"/>
<name>Y181_MYCTU</name>
<protein>
    <recommendedName>
        <fullName>Putative quercetin 2,3-dioxygenase Rv0181c</fullName>
        <shortName>Putative quercetinase</shortName>
        <ecNumber>1.13.11.24</ecNumber>
    </recommendedName>
    <alternativeName>
        <fullName>Pirin-like protein Rv0181c</fullName>
    </alternativeName>
</protein>
<comment type="function">
    <text evidence="1">Putative quercetin 2,3-dioxygenase.</text>
</comment>
<comment type="catalytic activity">
    <reaction>
        <text>quercetin + O2 = 2-(3,4-dihydroxybenzoyloxy)-4,6-dihydroxybenzoate + CO</text>
        <dbReference type="Rhea" id="RHEA:15381"/>
        <dbReference type="ChEBI" id="CHEBI:15379"/>
        <dbReference type="ChEBI" id="CHEBI:17245"/>
        <dbReference type="ChEBI" id="CHEBI:57628"/>
        <dbReference type="ChEBI" id="CHEBI:57694"/>
        <dbReference type="EC" id="1.13.11.24"/>
    </reaction>
</comment>
<comment type="cofactor">
    <cofactor evidence="1">
        <name>a divalent metal cation</name>
        <dbReference type="ChEBI" id="CHEBI:60240"/>
    </cofactor>
    <text evidence="1">Binds 1 divalent metal cation.</text>
</comment>
<comment type="pathway">
    <text>Flavonoid metabolism; quercetin degradation.</text>
</comment>
<comment type="similarity">
    <text evidence="2">Belongs to the pirin family.</text>
</comment>
<sequence>MTATVEIRRAADRAVTTTSWLKSRHSFSFGDHYDPDNTHHGLLLVNNDDQMEPASGFDPHPHRDMEIVTWVLRGALRHQDSAGNSGVIYPGLAQRMSAGTGILHSEMNDSATEPVHFVQMWVIPDATGITASYQQQEIDDELLRAGLVTIASGIPGQDAALTLHNSSASLHGARLRPGATVSLPCAPFLHLFVAYGRLTLEGGGELADGDAVRFTDADARGLTANEPSEVLIWEMHAKLGDSAT</sequence>
<organism>
    <name type="scientific">Mycobacterium tuberculosis (strain ATCC 25618 / H37Rv)</name>
    <dbReference type="NCBI Taxonomy" id="83332"/>
    <lineage>
        <taxon>Bacteria</taxon>
        <taxon>Bacillati</taxon>
        <taxon>Actinomycetota</taxon>
        <taxon>Actinomycetes</taxon>
        <taxon>Mycobacteriales</taxon>
        <taxon>Mycobacteriaceae</taxon>
        <taxon>Mycobacterium</taxon>
        <taxon>Mycobacterium tuberculosis complex</taxon>
    </lineage>
</organism>
<accession>P9WI85</accession>
<accession>L0T5S0</accession>
<accession>O07425</accession>
<accession>P65724</accession>
<gene>
    <name type="ordered locus">Rv0181c</name>
    <name type="ORF">MTCI28.21c</name>
</gene>
<dbReference type="EC" id="1.13.11.24"/>
<dbReference type="EMBL" id="AL123456">
    <property type="protein sequence ID" value="CCP42907.1"/>
    <property type="molecule type" value="Genomic_DNA"/>
</dbReference>
<dbReference type="PIR" id="H70905">
    <property type="entry name" value="H70905"/>
</dbReference>
<dbReference type="RefSeq" id="NP_214695.1">
    <property type="nucleotide sequence ID" value="NC_000962.3"/>
</dbReference>
<dbReference type="RefSeq" id="WP_003401107.1">
    <property type="nucleotide sequence ID" value="NZ_NVQJ01000001.1"/>
</dbReference>
<dbReference type="SMR" id="P9WI85"/>
<dbReference type="FunCoup" id="P9WI85">
    <property type="interactions" value="12"/>
</dbReference>
<dbReference type="STRING" id="83332.Rv0181c"/>
<dbReference type="PaxDb" id="83332-Rv0181c"/>
<dbReference type="DNASU" id="886788"/>
<dbReference type="GeneID" id="886788"/>
<dbReference type="KEGG" id="mtu:Rv0181c"/>
<dbReference type="KEGG" id="mtv:RVBD_0181c"/>
<dbReference type="TubercuList" id="Rv0181c"/>
<dbReference type="eggNOG" id="COG1741">
    <property type="taxonomic scope" value="Bacteria"/>
</dbReference>
<dbReference type="InParanoid" id="P9WI85"/>
<dbReference type="OrthoDB" id="321327at2"/>
<dbReference type="PhylomeDB" id="P9WI85"/>
<dbReference type="UniPathway" id="UPA00724"/>
<dbReference type="Proteomes" id="UP000001584">
    <property type="component" value="Chromosome"/>
</dbReference>
<dbReference type="GO" id="GO:0005829">
    <property type="term" value="C:cytosol"/>
    <property type="evidence" value="ECO:0007005"/>
    <property type="project" value="MTBBASE"/>
</dbReference>
<dbReference type="GO" id="GO:0005886">
    <property type="term" value="C:plasma membrane"/>
    <property type="evidence" value="ECO:0007005"/>
    <property type="project" value="MTBBASE"/>
</dbReference>
<dbReference type="GO" id="GO:0046872">
    <property type="term" value="F:metal ion binding"/>
    <property type="evidence" value="ECO:0007669"/>
    <property type="project" value="UniProtKB-KW"/>
</dbReference>
<dbReference type="GO" id="GO:0008127">
    <property type="term" value="F:quercetin 2,3-dioxygenase activity"/>
    <property type="evidence" value="ECO:0007669"/>
    <property type="project" value="UniProtKB-EC"/>
</dbReference>
<dbReference type="CDD" id="cd02910">
    <property type="entry name" value="cupin_Yhhw_N"/>
    <property type="match status" value="1"/>
</dbReference>
<dbReference type="Gene3D" id="2.60.120.10">
    <property type="entry name" value="Jelly Rolls"/>
    <property type="match status" value="2"/>
</dbReference>
<dbReference type="InterPro" id="IPR012093">
    <property type="entry name" value="Pirin"/>
</dbReference>
<dbReference type="InterPro" id="IPR003829">
    <property type="entry name" value="Pirin_N_dom"/>
</dbReference>
<dbReference type="InterPro" id="IPR041602">
    <property type="entry name" value="Quercetinase_C"/>
</dbReference>
<dbReference type="InterPro" id="IPR014710">
    <property type="entry name" value="RmlC-like_jellyroll"/>
</dbReference>
<dbReference type="InterPro" id="IPR011051">
    <property type="entry name" value="RmlC_Cupin_sf"/>
</dbReference>
<dbReference type="PANTHER" id="PTHR43212">
    <property type="entry name" value="QUERCETIN 2,3-DIOXYGENASE"/>
    <property type="match status" value="1"/>
</dbReference>
<dbReference type="PANTHER" id="PTHR43212:SF3">
    <property type="entry name" value="QUERCETIN 2,3-DIOXYGENASE"/>
    <property type="match status" value="1"/>
</dbReference>
<dbReference type="Pfam" id="PF02678">
    <property type="entry name" value="Pirin"/>
    <property type="match status" value="1"/>
</dbReference>
<dbReference type="Pfam" id="PF17954">
    <property type="entry name" value="Pirin_C_2"/>
    <property type="match status" value="1"/>
</dbReference>
<dbReference type="PIRSF" id="PIRSF006232">
    <property type="entry name" value="Pirin"/>
    <property type="match status" value="1"/>
</dbReference>
<dbReference type="SUPFAM" id="SSF51182">
    <property type="entry name" value="RmlC-like cupins"/>
    <property type="match status" value="1"/>
</dbReference>
<reference key="1">
    <citation type="journal article" date="1998" name="Nature">
        <title>Deciphering the biology of Mycobacterium tuberculosis from the complete genome sequence.</title>
        <authorList>
            <person name="Cole S.T."/>
            <person name="Brosch R."/>
            <person name="Parkhill J."/>
            <person name="Garnier T."/>
            <person name="Churcher C.M."/>
            <person name="Harris D.E."/>
            <person name="Gordon S.V."/>
            <person name="Eiglmeier K."/>
            <person name="Gas S."/>
            <person name="Barry C.E. III"/>
            <person name="Tekaia F."/>
            <person name="Badcock K."/>
            <person name="Basham D."/>
            <person name="Brown D."/>
            <person name="Chillingworth T."/>
            <person name="Connor R."/>
            <person name="Davies R.M."/>
            <person name="Devlin K."/>
            <person name="Feltwell T."/>
            <person name="Gentles S."/>
            <person name="Hamlin N."/>
            <person name="Holroyd S."/>
            <person name="Hornsby T."/>
            <person name="Jagels K."/>
            <person name="Krogh A."/>
            <person name="McLean J."/>
            <person name="Moule S."/>
            <person name="Murphy L.D."/>
            <person name="Oliver S."/>
            <person name="Osborne J."/>
            <person name="Quail M.A."/>
            <person name="Rajandream M.A."/>
            <person name="Rogers J."/>
            <person name="Rutter S."/>
            <person name="Seeger K."/>
            <person name="Skelton S."/>
            <person name="Squares S."/>
            <person name="Squares R."/>
            <person name="Sulston J.E."/>
            <person name="Taylor K."/>
            <person name="Whitehead S."/>
            <person name="Barrell B.G."/>
        </authorList>
    </citation>
    <scope>NUCLEOTIDE SEQUENCE [LARGE SCALE GENOMIC DNA]</scope>
    <source>
        <strain>ATCC 25618 / H37Rv</strain>
    </source>
</reference>
<reference key="2">
    <citation type="journal article" date="2011" name="Mol. Cell. Proteomics">
        <title>Proteogenomic analysis of Mycobacterium tuberculosis by high resolution mass spectrometry.</title>
        <authorList>
            <person name="Kelkar D.S."/>
            <person name="Kumar D."/>
            <person name="Kumar P."/>
            <person name="Balakrishnan L."/>
            <person name="Muthusamy B."/>
            <person name="Yadav A.K."/>
            <person name="Shrivastava P."/>
            <person name="Marimuthu A."/>
            <person name="Anand S."/>
            <person name="Sundaram H."/>
            <person name="Kingsbury R."/>
            <person name="Harsha H.C."/>
            <person name="Nair B."/>
            <person name="Prasad T.S."/>
            <person name="Chauhan D.S."/>
            <person name="Katoch K."/>
            <person name="Katoch V.M."/>
            <person name="Kumar P."/>
            <person name="Chaerkady R."/>
            <person name="Ramachandran S."/>
            <person name="Dash D."/>
            <person name="Pandey A."/>
        </authorList>
    </citation>
    <scope>IDENTIFICATION BY MASS SPECTROMETRY [LARGE SCALE ANALYSIS]</scope>
    <source>
        <strain>ATCC 25618 / H37Rv</strain>
    </source>
</reference>
<proteinExistence type="evidence at protein level"/>